<name>TRIQK_HUMAN</name>
<protein>
    <recommendedName>
        <fullName>Triple QxxK/R motif-containing protein</fullName>
    </recommendedName>
    <alternativeName>
        <fullName>Triple repetitive-sequence of QXXK/R protein homolog</fullName>
    </alternativeName>
</protein>
<dbReference type="EMBL" id="DQ351291">
    <property type="protein sequence ID" value="ABC84190.1"/>
    <property type="molecule type" value="mRNA"/>
</dbReference>
<dbReference type="EMBL" id="CR749421">
    <property type="protein sequence ID" value="CAH56121.1"/>
    <property type="molecule type" value="mRNA"/>
</dbReference>
<dbReference type="EMBL" id="CH471060">
    <property type="protein sequence ID" value="EAW91691.1"/>
    <property type="molecule type" value="Genomic_DNA"/>
</dbReference>
<dbReference type="CCDS" id="CCDS55261.1"/>
<dbReference type="RefSeq" id="NP_001165266.1">
    <property type="nucleotide sequence ID" value="NM_001171795.2"/>
</dbReference>
<dbReference type="RefSeq" id="NP_001165267.1">
    <property type="nucleotide sequence ID" value="NM_001171796.2"/>
</dbReference>
<dbReference type="RefSeq" id="NP_001165268.1">
    <property type="nucleotide sequence ID" value="NM_001171797.2"/>
</dbReference>
<dbReference type="RefSeq" id="NP_001165269.1">
    <property type="nucleotide sequence ID" value="NM_001171798.2"/>
</dbReference>
<dbReference type="RefSeq" id="NP_001165270.1">
    <property type="nucleotide sequence ID" value="NM_001171799.2"/>
</dbReference>
<dbReference type="RefSeq" id="NP_001177964.1">
    <property type="nucleotide sequence ID" value="NM_001191035.2"/>
</dbReference>
<dbReference type="RefSeq" id="NP_001177965.1">
    <property type="nucleotide sequence ID" value="NM_001191036.2"/>
</dbReference>
<dbReference type="RefSeq" id="XP_016868836.1">
    <property type="nucleotide sequence ID" value="XM_017013347.2"/>
</dbReference>
<dbReference type="RefSeq" id="XP_016868837.1">
    <property type="nucleotide sequence ID" value="XM_017013348.1"/>
</dbReference>
<dbReference type="RefSeq" id="XP_016868838.1">
    <property type="nucleotide sequence ID" value="XM_017013349.2"/>
</dbReference>
<dbReference type="RefSeq" id="XP_016868839.1">
    <property type="nucleotide sequence ID" value="XM_017013350.2"/>
</dbReference>
<dbReference type="RefSeq" id="XP_024302904.1">
    <property type="nucleotide sequence ID" value="XM_024447136.2"/>
</dbReference>
<dbReference type="RefSeq" id="XP_047277667.1">
    <property type="nucleotide sequence ID" value="XM_047421711.1"/>
</dbReference>
<dbReference type="RefSeq" id="XP_047277668.1">
    <property type="nucleotide sequence ID" value="XM_047421712.1"/>
</dbReference>
<dbReference type="RefSeq" id="XP_047277669.1">
    <property type="nucleotide sequence ID" value="XM_047421713.1"/>
</dbReference>
<dbReference type="RefSeq" id="XP_054216302.1">
    <property type="nucleotide sequence ID" value="XM_054360327.1"/>
</dbReference>
<dbReference type="RefSeq" id="XP_054216303.1">
    <property type="nucleotide sequence ID" value="XM_054360328.1"/>
</dbReference>
<dbReference type="RefSeq" id="XP_054216304.1">
    <property type="nucleotide sequence ID" value="XM_054360329.1"/>
</dbReference>
<dbReference type="RefSeq" id="XP_054216305.1">
    <property type="nucleotide sequence ID" value="XM_054360330.1"/>
</dbReference>
<dbReference type="RefSeq" id="XP_054216306.1">
    <property type="nucleotide sequence ID" value="XM_054360331.1"/>
</dbReference>
<dbReference type="RefSeq" id="XP_054216307.1">
    <property type="nucleotide sequence ID" value="XM_054360332.1"/>
</dbReference>
<dbReference type="SMR" id="Q629K1"/>
<dbReference type="BioGRID" id="130312">
    <property type="interactions" value="3"/>
</dbReference>
<dbReference type="FunCoup" id="Q629K1">
    <property type="interactions" value="24"/>
</dbReference>
<dbReference type="STRING" id="9606.ENSP00000429517"/>
<dbReference type="iPTMnet" id="Q629K1"/>
<dbReference type="PhosphoSitePlus" id="Q629K1"/>
<dbReference type="BioMuta" id="TRIQK"/>
<dbReference type="DMDM" id="74708352"/>
<dbReference type="MassIVE" id="Q629K1"/>
<dbReference type="PaxDb" id="9606-ENSP00000429517"/>
<dbReference type="PeptideAtlas" id="Q629K1"/>
<dbReference type="ProteomicsDB" id="65875"/>
<dbReference type="Pumba" id="Q629K1"/>
<dbReference type="TopDownProteomics" id="Q629K1"/>
<dbReference type="Antibodypedia" id="77803">
    <property type="antibodies" value="2 antibodies from 2 providers"/>
</dbReference>
<dbReference type="DNASU" id="286144"/>
<dbReference type="Ensembl" id="ENST00000378861.9">
    <property type="protein sequence ID" value="ENSP00000368138.5"/>
    <property type="gene ID" value="ENSG00000205133.12"/>
</dbReference>
<dbReference type="Ensembl" id="ENST00000518748.5">
    <property type="protein sequence ID" value="ENSP00000430837.1"/>
    <property type="gene ID" value="ENSG00000205133.12"/>
</dbReference>
<dbReference type="Ensembl" id="ENST00000519969.5">
    <property type="protein sequence ID" value="ENSP00000429381.1"/>
    <property type="gene ID" value="ENSG00000205133.12"/>
</dbReference>
<dbReference type="Ensembl" id="ENST00000520430.5">
    <property type="protein sequence ID" value="ENSP00000428822.1"/>
    <property type="gene ID" value="ENSG00000205133.12"/>
</dbReference>
<dbReference type="Ensembl" id="ENST00000520686.5">
    <property type="protein sequence ID" value="ENSP00000429822.1"/>
    <property type="gene ID" value="ENSG00000205133.12"/>
</dbReference>
<dbReference type="Ensembl" id="ENST00000521617.5">
    <property type="protein sequence ID" value="ENSP00000430992.1"/>
    <property type="gene ID" value="ENSG00000205133.12"/>
</dbReference>
<dbReference type="Ensembl" id="ENST00000521988.6">
    <property type="protein sequence ID" value="ENSP00000429517.1"/>
    <property type="gene ID" value="ENSG00000205133.12"/>
</dbReference>
<dbReference type="Ensembl" id="ENST00000524107.5">
    <property type="protein sequence ID" value="ENSP00000429742.1"/>
    <property type="gene ID" value="ENSG00000205133.12"/>
</dbReference>
<dbReference type="Ensembl" id="ENST00000537541.1">
    <property type="protein sequence ID" value="ENSP00000442030.1"/>
    <property type="gene ID" value="ENSG00000205133.12"/>
</dbReference>
<dbReference type="GeneID" id="286144"/>
<dbReference type="KEGG" id="hsa:286144"/>
<dbReference type="MANE-Select" id="ENST00000521988.6">
    <property type="protein sequence ID" value="ENSP00000429517.1"/>
    <property type="RefSeq nucleotide sequence ID" value="NM_001171797.2"/>
    <property type="RefSeq protein sequence ID" value="NP_001165268.1"/>
</dbReference>
<dbReference type="UCSC" id="uc003yfk.5">
    <property type="organism name" value="human"/>
</dbReference>
<dbReference type="AGR" id="HGNC:27828"/>
<dbReference type="CTD" id="286144"/>
<dbReference type="DisGeNET" id="286144"/>
<dbReference type="GeneCards" id="TRIQK"/>
<dbReference type="HGNC" id="HGNC:27828">
    <property type="gene designation" value="TRIQK"/>
</dbReference>
<dbReference type="HPA" id="ENSG00000205133">
    <property type="expression patterns" value="Low tissue specificity"/>
</dbReference>
<dbReference type="neXtProt" id="NX_Q629K1"/>
<dbReference type="OpenTargets" id="ENSG00000205133"/>
<dbReference type="PharmGKB" id="PA164717477"/>
<dbReference type="VEuPathDB" id="HostDB:ENSG00000205133"/>
<dbReference type="eggNOG" id="ENOG502S3QR">
    <property type="taxonomic scope" value="Eukaryota"/>
</dbReference>
<dbReference type="GeneTree" id="ENSGT00390000017350"/>
<dbReference type="InParanoid" id="Q629K1"/>
<dbReference type="OMA" id="NIGKQDY"/>
<dbReference type="OrthoDB" id="10049402at2759"/>
<dbReference type="PAN-GO" id="Q629K1">
    <property type="GO annotations" value="0 GO annotations based on evolutionary models"/>
</dbReference>
<dbReference type="PhylomeDB" id="Q629K1"/>
<dbReference type="TreeFam" id="TF328583"/>
<dbReference type="PathwayCommons" id="Q629K1"/>
<dbReference type="SignaLink" id="Q629K1"/>
<dbReference type="BioGRID-ORCS" id="286144">
    <property type="hits" value="15 hits in 1089 CRISPR screens"/>
</dbReference>
<dbReference type="ChiTaRS" id="TRIQK">
    <property type="organism name" value="human"/>
</dbReference>
<dbReference type="GenomeRNAi" id="286144"/>
<dbReference type="Pharos" id="Q629K1">
    <property type="development level" value="Tdark"/>
</dbReference>
<dbReference type="PRO" id="PR:Q629K1"/>
<dbReference type="Proteomes" id="UP000005640">
    <property type="component" value="Chromosome 8"/>
</dbReference>
<dbReference type="RNAct" id="Q629K1">
    <property type="molecule type" value="protein"/>
</dbReference>
<dbReference type="Bgee" id="ENSG00000205133">
    <property type="expression patterns" value="Expressed in epithelial cell of pancreas and 189 other cell types or tissues"/>
</dbReference>
<dbReference type="ExpressionAtlas" id="Q629K1">
    <property type="expression patterns" value="baseline and differential"/>
</dbReference>
<dbReference type="GO" id="GO:0005789">
    <property type="term" value="C:endoplasmic reticulum membrane"/>
    <property type="evidence" value="ECO:0007669"/>
    <property type="project" value="UniProtKB-SubCell"/>
</dbReference>
<dbReference type="InterPro" id="IPR024842">
    <property type="entry name" value="TRIQK"/>
</dbReference>
<dbReference type="PANTHER" id="PTHR20583">
    <property type="entry name" value="TRIPLE QXXK/R MOTIF-CONTAINING PROTEIN"/>
    <property type="match status" value="1"/>
</dbReference>
<dbReference type="PANTHER" id="PTHR20583:SF1">
    <property type="entry name" value="TRIPLE QXXK_R MOTIF-CONTAINING PROTEIN"/>
    <property type="match status" value="1"/>
</dbReference>
<dbReference type="Pfam" id="PF15168">
    <property type="entry name" value="TRIQK"/>
    <property type="match status" value="1"/>
</dbReference>
<accession>Q629K1</accession>
<evidence type="ECO:0000250" key="1"/>
<evidence type="ECO:0000255" key="2"/>
<evidence type="ECO:0000269" key="3">
    <source>
    </source>
</evidence>
<evidence type="ECO:0000305" key="4"/>
<comment type="function">
    <text evidence="1">May play a role in cell growth and maintenance of cell morphology.</text>
</comment>
<comment type="subcellular location">
    <subcellularLocation>
        <location evidence="3">Endoplasmic reticulum membrane</location>
        <topology evidence="3">Single-pass membrane protein</topology>
    </subcellularLocation>
</comment>
<comment type="similarity">
    <text evidence="4">Belongs to the TRIQK family.</text>
</comment>
<organism>
    <name type="scientific">Homo sapiens</name>
    <name type="common">Human</name>
    <dbReference type="NCBI Taxonomy" id="9606"/>
    <lineage>
        <taxon>Eukaryota</taxon>
        <taxon>Metazoa</taxon>
        <taxon>Chordata</taxon>
        <taxon>Craniata</taxon>
        <taxon>Vertebrata</taxon>
        <taxon>Euteleostomi</taxon>
        <taxon>Mammalia</taxon>
        <taxon>Eutheria</taxon>
        <taxon>Euarchontoglires</taxon>
        <taxon>Primates</taxon>
        <taxon>Haplorrhini</taxon>
        <taxon>Catarrhini</taxon>
        <taxon>Hominidae</taxon>
        <taxon>Homo</taxon>
    </lineage>
</organism>
<sequence length="86" mass="9683">MGRKDAATIKLPVDQYRKQIGKQDYKKTKPILRATKLKAEAKKTAIGIKEVGLVLAAILALLLAFYAFFYLRLTTDVDPDLDQDED</sequence>
<reference key="1">
    <citation type="journal article" date="2008" name="Zool. Sci.">
        <title>TRIQK, a novel family of small proteins localized to the endoplasmic reticulum membrane, is conserved across vertebrates.</title>
        <authorList>
            <person name="Onuma Y."/>
            <person name="Watanabe A."/>
            <person name="Aburatani H."/>
            <person name="Asashima M."/>
            <person name="Whitman M."/>
        </authorList>
    </citation>
    <scope>NUCLEOTIDE SEQUENCE [MRNA]</scope>
    <scope>SUBCELLULAR LOCATION</scope>
</reference>
<reference key="2">
    <citation type="submission" date="2006-01" db="EMBL/GenBank/DDBJ databases">
        <title>Characterization of endoplasmic reticulum localized mitosis interference factor (ERMIN).</title>
        <authorList>
            <person name="Onuma Y."/>
            <person name="Whitman M."/>
        </authorList>
    </citation>
    <scope>NUCLEOTIDE SEQUENCE [MRNA]</scope>
</reference>
<reference key="3">
    <citation type="journal article" date="2007" name="BMC Genomics">
        <title>The full-ORF clone resource of the German cDNA consortium.</title>
        <authorList>
            <person name="Bechtel S."/>
            <person name="Rosenfelder H."/>
            <person name="Duda A."/>
            <person name="Schmidt C.P."/>
            <person name="Ernst U."/>
            <person name="Wellenreuther R."/>
            <person name="Mehrle A."/>
            <person name="Schuster C."/>
            <person name="Bahr A."/>
            <person name="Bloecker H."/>
            <person name="Heubner D."/>
            <person name="Hoerlein A."/>
            <person name="Michel G."/>
            <person name="Wedler H."/>
            <person name="Koehrer K."/>
            <person name="Ottenwaelder B."/>
            <person name="Poustka A."/>
            <person name="Wiemann S."/>
            <person name="Schupp I."/>
        </authorList>
    </citation>
    <scope>NUCLEOTIDE SEQUENCE [LARGE SCALE MRNA]</scope>
    <source>
        <tissue>Liver</tissue>
    </source>
</reference>
<reference key="4">
    <citation type="submission" date="2005-07" db="EMBL/GenBank/DDBJ databases">
        <authorList>
            <person name="Mural R.J."/>
            <person name="Istrail S."/>
            <person name="Sutton G.G."/>
            <person name="Florea L."/>
            <person name="Halpern A.L."/>
            <person name="Mobarry C.M."/>
            <person name="Lippert R."/>
            <person name="Walenz B."/>
            <person name="Shatkay H."/>
            <person name="Dew I."/>
            <person name="Miller J.R."/>
            <person name="Flanigan M.J."/>
            <person name="Edwards N.J."/>
            <person name="Bolanos R."/>
            <person name="Fasulo D."/>
            <person name="Halldorsson B.V."/>
            <person name="Hannenhalli S."/>
            <person name="Turner R."/>
            <person name="Yooseph S."/>
            <person name="Lu F."/>
            <person name="Nusskern D.R."/>
            <person name="Shue B.C."/>
            <person name="Zheng X.H."/>
            <person name="Zhong F."/>
            <person name="Delcher A.L."/>
            <person name="Huson D.H."/>
            <person name="Kravitz S.A."/>
            <person name="Mouchard L."/>
            <person name="Reinert K."/>
            <person name="Remington K.A."/>
            <person name="Clark A.G."/>
            <person name="Waterman M.S."/>
            <person name="Eichler E.E."/>
            <person name="Adams M.D."/>
            <person name="Hunkapiller M.W."/>
            <person name="Myers E.W."/>
            <person name="Venter J.C."/>
        </authorList>
    </citation>
    <scope>NUCLEOTIDE SEQUENCE [LARGE SCALE GENOMIC DNA]</scope>
</reference>
<feature type="chain" id="PRO_0000340674" description="Triple QxxK/R motif-containing protein">
    <location>
        <begin position="1"/>
        <end position="86"/>
    </location>
</feature>
<feature type="transmembrane region" description="Helical" evidence="2">
    <location>
        <begin position="51"/>
        <end position="71"/>
    </location>
</feature>
<gene>
    <name type="primary">TRIQK</name>
    <name type="synonym">C8orf83</name>
</gene>
<keyword id="KW-0256">Endoplasmic reticulum</keyword>
<keyword id="KW-0472">Membrane</keyword>
<keyword id="KW-1267">Proteomics identification</keyword>
<keyword id="KW-1185">Reference proteome</keyword>
<keyword id="KW-0812">Transmembrane</keyword>
<keyword id="KW-1133">Transmembrane helix</keyword>
<proteinExistence type="evidence at protein level"/>